<evidence type="ECO:0000255" key="1"/>
<evidence type="ECO:0000269" key="2">
    <source>
    </source>
</evidence>
<evidence type="ECO:0000269" key="3">
    <source>
    </source>
</evidence>
<evidence type="ECO:0000269" key="4">
    <source>
    </source>
</evidence>
<evidence type="ECO:0000303" key="5">
    <source>
    </source>
</evidence>
<evidence type="ECO:0000305" key="6"/>
<evidence type="ECO:0000312" key="7">
    <source>
        <dbReference type="Araport" id="AT1G67080"/>
    </source>
</evidence>
<evidence type="ECO:0000312" key="8">
    <source>
        <dbReference type="EMBL" id="AAF98216.1"/>
    </source>
</evidence>
<accession>Q8LFP9</accession>
<accession>Q9FZH4</accession>
<feature type="transit peptide" description="Chloroplast" evidence="1">
    <location>
        <begin position="1"/>
        <end position="37"/>
    </location>
</feature>
<feature type="chain" id="PRO_0000435892" description="Protein ABA DEFICIENT 4, chloroplastic">
    <location>
        <begin position="38"/>
        <end position="220"/>
    </location>
</feature>
<feature type="transmembrane region" description="Helical" evidence="1">
    <location>
        <begin position="77"/>
        <end position="97"/>
    </location>
</feature>
<feature type="transmembrane region" description="Helical" evidence="1">
    <location>
        <begin position="112"/>
        <end position="132"/>
    </location>
</feature>
<feature type="transmembrane region" description="Helical" evidence="1">
    <location>
        <begin position="154"/>
        <end position="174"/>
    </location>
</feature>
<feature type="transmembrane region" description="Helical" evidence="1">
    <location>
        <begin position="195"/>
        <end position="215"/>
    </location>
</feature>
<sequence length="220" mass="24624">MGFSSFISQPLSSSLSVMKRNVSAKRSELCLDSSKIRLDHRWSFIGGSRISVQSNSYTVVHKKFSGVRASWLTTTQIASSVFAVGTTAVLPFYTLMVVAPKAEITKKCMESSVPYIILGVLYVYLLYISWTPETLKYMFSSKYMLPELSGIAKMFSSEMTLASAWIHLLVVDLFAARQVYNDGLENQIETRHSVSLCLLFCPVGIVSHFVTKAIINNQYK</sequence>
<gene>
    <name evidence="5" type="primary">ABA4</name>
    <name evidence="7" type="ordered locus">At1g67080</name>
    <name evidence="8" type="ORF">F1O19.13</name>
</gene>
<comment type="function">
    <text evidence="2 3">Required for neoxanthin biosynthesis, an intermediary step in abscisic acid (ABA) biosynthesis. Probably not involved directly in the enzymatic conversion of violaxanthin to neoxanthin. Cannot convert violaxanthin to neoxanthin in vitro. Required for ABA biosynthesis in response to drought stress (PubMed:17470058). Required for neoxanthin biosynthesis which is involved in photoprotection of photosystem II (PSII). Neoxanthin acts as an antioxidant within the photosystem PSII supercomplex (PubMed:17351115).</text>
</comment>
<comment type="subcellular location">
    <subcellularLocation>
        <location evidence="1">Plastid</location>
        <location evidence="1">Chloroplast membrane</location>
        <topology evidence="1">Multi-pass membrane protein</topology>
    </subcellularLocation>
</comment>
<comment type="tissue specificity">
    <text evidence="3">Expressed in root vasculature, root hairs, leaves, trichomes, sepals, stamens, stigma, pedicels, siliques and embryo.</text>
</comment>
<comment type="induction">
    <text evidence="4">Induced by heat stress.</text>
</comment>
<comment type="disruption phenotype">
    <text evidence="2 3">No visible phenotype under normal growth conditions, but mutant plants accumulate violaxanthin and completely lack neoxanthin.</text>
</comment>
<comment type="miscellaneous">
    <text evidence="3">Plants over-expressing ABA4 have increased levels of trans-neoxanthin.</text>
</comment>
<comment type="sequence caution" evidence="6">
    <conflict type="erroneous gene model prediction">
        <sequence resource="EMBL-CDS" id="AAF98216"/>
    </conflict>
</comment>
<keyword id="KW-0150">Chloroplast</keyword>
<keyword id="KW-0472">Membrane</keyword>
<keyword id="KW-0934">Plastid</keyword>
<keyword id="KW-1185">Reference proteome</keyword>
<keyword id="KW-0809">Transit peptide</keyword>
<keyword id="KW-0812">Transmembrane</keyword>
<keyword id="KW-1133">Transmembrane helix</keyword>
<dbReference type="EMBL" id="AC007152">
    <property type="protein sequence ID" value="AAF98216.1"/>
    <property type="status" value="ALT_SEQ"/>
    <property type="molecule type" value="Genomic_DNA"/>
</dbReference>
<dbReference type="EMBL" id="CP002684">
    <property type="protein sequence ID" value="AEE34593.1"/>
    <property type="molecule type" value="Genomic_DNA"/>
</dbReference>
<dbReference type="EMBL" id="AK175554">
    <property type="protein sequence ID" value="BAD43317.1"/>
    <property type="molecule type" value="mRNA"/>
</dbReference>
<dbReference type="EMBL" id="BT024604">
    <property type="protein sequence ID" value="ABD43002.1"/>
    <property type="molecule type" value="mRNA"/>
</dbReference>
<dbReference type="EMBL" id="AY084717">
    <property type="protein sequence ID" value="AAM61291.1"/>
    <property type="molecule type" value="mRNA"/>
</dbReference>
<dbReference type="PIR" id="F96694">
    <property type="entry name" value="F96694"/>
</dbReference>
<dbReference type="RefSeq" id="NP_564889.1">
    <property type="nucleotide sequence ID" value="NM_105378.4"/>
</dbReference>
<dbReference type="FunCoup" id="Q8LFP9">
    <property type="interactions" value="419"/>
</dbReference>
<dbReference type="STRING" id="3702.Q8LFP9"/>
<dbReference type="iPTMnet" id="Q8LFP9"/>
<dbReference type="PaxDb" id="3702-AT1G67080.1"/>
<dbReference type="ProteomicsDB" id="244545"/>
<dbReference type="EnsemblPlants" id="AT1G67080.1">
    <property type="protein sequence ID" value="AT1G67080.1"/>
    <property type="gene ID" value="AT1G67080"/>
</dbReference>
<dbReference type="GeneID" id="843028"/>
<dbReference type="Gramene" id="AT1G67080.1">
    <property type="protein sequence ID" value="AT1G67080.1"/>
    <property type="gene ID" value="AT1G67080"/>
</dbReference>
<dbReference type="KEGG" id="ath:AT1G67080"/>
<dbReference type="Araport" id="AT1G67080"/>
<dbReference type="TAIR" id="AT1G67080">
    <property type="gene designation" value="ABA4"/>
</dbReference>
<dbReference type="eggNOG" id="ENOG502QVVZ">
    <property type="taxonomic scope" value="Eukaryota"/>
</dbReference>
<dbReference type="HOGENOM" id="CLU_098835_0_0_1"/>
<dbReference type="InParanoid" id="Q8LFP9"/>
<dbReference type="OMA" id="ASCAFTW"/>
<dbReference type="OrthoDB" id="196782at2759"/>
<dbReference type="PhylomeDB" id="Q8LFP9"/>
<dbReference type="BioCyc" id="ARA:AT1G67080-MONOMER"/>
<dbReference type="PRO" id="PR:Q8LFP9"/>
<dbReference type="Proteomes" id="UP000006548">
    <property type="component" value="Chromosome 1"/>
</dbReference>
<dbReference type="ExpressionAtlas" id="Q8LFP9">
    <property type="expression patterns" value="baseline and differential"/>
</dbReference>
<dbReference type="GO" id="GO:0009941">
    <property type="term" value="C:chloroplast envelope"/>
    <property type="evidence" value="ECO:0007005"/>
    <property type="project" value="TAIR"/>
</dbReference>
<dbReference type="GO" id="GO:0031969">
    <property type="term" value="C:chloroplast membrane"/>
    <property type="evidence" value="ECO:0007669"/>
    <property type="project" value="UniProtKB-SubCell"/>
</dbReference>
<dbReference type="GO" id="GO:0009688">
    <property type="term" value="P:abscisic acid biosynthetic process"/>
    <property type="evidence" value="ECO:0000315"/>
    <property type="project" value="TAIR"/>
</dbReference>
<dbReference type="GO" id="GO:0032928">
    <property type="term" value="P:regulation of superoxide anion generation"/>
    <property type="evidence" value="ECO:0000315"/>
    <property type="project" value="TAIR"/>
</dbReference>
<dbReference type="GO" id="GO:0016122">
    <property type="term" value="P:xanthophyll metabolic process"/>
    <property type="evidence" value="ECO:0000315"/>
    <property type="project" value="TAIR"/>
</dbReference>
<dbReference type="InterPro" id="IPR025461">
    <property type="entry name" value="ABA4-like"/>
</dbReference>
<dbReference type="PANTHER" id="PTHR34543">
    <property type="entry name" value="PROTEIN ABA DEFICIENT 4, CHLOROPLASTIC"/>
    <property type="match status" value="1"/>
</dbReference>
<dbReference type="PANTHER" id="PTHR34543:SF1">
    <property type="entry name" value="PROTEIN ABA DEFICIENT 4, CHLOROPLASTIC"/>
    <property type="match status" value="1"/>
</dbReference>
<dbReference type="Pfam" id="PF14108">
    <property type="entry name" value="ABA4-like"/>
    <property type="match status" value="1"/>
</dbReference>
<organism>
    <name type="scientific">Arabidopsis thaliana</name>
    <name type="common">Mouse-ear cress</name>
    <dbReference type="NCBI Taxonomy" id="3702"/>
    <lineage>
        <taxon>Eukaryota</taxon>
        <taxon>Viridiplantae</taxon>
        <taxon>Streptophyta</taxon>
        <taxon>Embryophyta</taxon>
        <taxon>Tracheophyta</taxon>
        <taxon>Spermatophyta</taxon>
        <taxon>Magnoliopsida</taxon>
        <taxon>eudicotyledons</taxon>
        <taxon>Gunneridae</taxon>
        <taxon>Pentapetalae</taxon>
        <taxon>rosids</taxon>
        <taxon>malvids</taxon>
        <taxon>Brassicales</taxon>
        <taxon>Brassicaceae</taxon>
        <taxon>Camelineae</taxon>
        <taxon>Arabidopsis</taxon>
    </lineage>
</organism>
<protein>
    <recommendedName>
        <fullName evidence="5">Protein ABA DEFICIENT 4, chloroplastic</fullName>
    </recommendedName>
</protein>
<name>ABA4_ARATH</name>
<proteinExistence type="evidence at transcript level"/>
<reference key="1">
    <citation type="journal article" date="2000" name="Nature">
        <title>Sequence and analysis of chromosome 1 of the plant Arabidopsis thaliana.</title>
        <authorList>
            <person name="Theologis A."/>
            <person name="Ecker J.R."/>
            <person name="Palm C.J."/>
            <person name="Federspiel N.A."/>
            <person name="Kaul S."/>
            <person name="White O."/>
            <person name="Alonso J."/>
            <person name="Altafi H."/>
            <person name="Araujo R."/>
            <person name="Bowman C.L."/>
            <person name="Brooks S.Y."/>
            <person name="Buehler E."/>
            <person name="Chan A."/>
            <person name="Chao Q."/>
            <person name="Chen H."/>
            <person name="Cheuk R.F."/>
            <person name="Chin C.W."/>
            <person name="Chung M.K."/>
            <person name="Conn L."/>
            <person name="Conway A.B."/>
            <person name="Conway A.R."/>
            <person name="Creasy T.H."/>
            <person name="Dewar K."/>
            <person name="Dunn P."/>
            <person name="Etgu P."/>
            <person name="Feldblyum T.V."/>
            <person name="Feng J.-D."/>
            <person name="Fong B."/>
            <person name="Fujii C.Y."/>
            <person name="Gill J.E."/>
            <person name="Goldsmith A.D."/>
            <person name="Haas B."/>
            <person name="Hansen N.F."/>
            <person name="Hughes B."/>
            <person name="Huizar L."/>
            <person name="Hunter J.L."/>
            <person name="Jenkins J."/>
            <person name="Johnson-Hopson C."/>
            <person name="Khan S."/>
            <person name="Khaykin E."/>
            <person name="Kim C.J."/>
            <person name="Koo H.L."/>
            <person name="Kremenetskaia I."/>
            <person name="Kurtz D.B."/>
            <person name="Kwan A."/>
            <person name="Lam B."/>
            <person name="Langin-Hooper S."/>
            <person name="Lee A."/>
            <person name="Lee J.M."/>
            <person name="Lenz C.A."/>
            <person name="Li J.H."/>
            <person name="Li Y.-P."/>
            <person name="Lin X."/>
            <person name="Liu S.X."/>
            <person name="Liu Z.A."/>
            <person name="Luros J.S."/>
            <person name="Maiti R."/>
            <person name="Marziali A."/>
            <person name="Militscher J."/>
            <person name="Miranda M."/>
            <person name="Nguyen M."/>
            <person name="Nierman W.C."/>
            <person name="Osborne B.I."/>
            <person name="Pai G."/>
            <person name="Peterson J."/>
            <person name="Pham P.K."/>
            <person name="Rizzo M."/>
            <person name="Rooney T."/>
            <person name="Rowley D."/>
            <person name="Sakano H."/>
            <person name="Salzberg S.L."/>
            <person name="Schwartz J.R."/>
            <person name="Shinn P."/>
            <person name="Southwick A.M."/>
            <person name="Sun H."/>
            <person name="Tallon L.J."/>
            <person name="Tambunga G."/>
            <person name="Toriumi M.J."/>
            <person name="Town C.D."/>
            <person name="Utterback T."/>
            <person name="Van Aken S."/>
            <person name="Vaysberg M."/>
            <person name="Vysotskaia V.S."/>
            <person name="Walker M."/>
            <person name="Wu D."/>
            <person name="Yu G."/>
            <person name="Fraser C.M."/>
            <person name="Venter J.C."/>
            <person name="Davis R.W."/>
        </authorList>
    </citation>
    <scope>NUCLEOTIDE SEQUENCE [LARGE SCALE GENOMIC DNA]</scope>
    <source>
        <strain>cv. Columbia</strain>
    </source>
</reference>
<reference key="2">
    <citation type="journal article" date="2017" name="Plant J.">
        <title>Araport11: a complete reannotation of the Arabidopsis thaliana reference genome.</title>
        <authorList>
            <person name="Cheng C.Y."/>
            <person name="Krishnakumar V."/>
            <person name="Chan A.P."/>
            <person name="Thibaud-Nissen F."/>
            <person name="Schobel S."/>
            <person name="Town C.D."/>
        </authorList>
    </citation>
    <scope>GENOME REANNOTATION</scope>
    <source>
        <strain>cv. Columbia</strain>
    </source>
</reference>
<reference key="3">
    <citation type="submission" date="2004-09" db="EMBL/GenBank/DDBJ databases">
        <title>Large-scale analysis of RIKEN Arabidopsis full-length (RAFL) cDNAs.</title>
        <authorList>
            <person name="Totoki Y."/>
            <person name="Seki M."/>
            <person name="Ishida J."/>
            <person name="Nakajima M."/>
            <person name="Enju A."/>
            <person name="Kamiya A."/>
            <person name="Narusaka M."/>
            <person name="Shin-i T."/>
            <person name="Nakagawa M."/>
            <person name="Sakamoto N."/>
            <person name="Oishi K."/>
            <person name="Kohara Y."/>
            <person name="Kobayashi M."/>
            <person name="Toyoda A."/>
            <person name="Sakaki Y."/>
            <person name="Sakurai T."/>
            <person name="Iida K."/>
            <person name="Akiyama K."/>
            <person name="Satou M."/>
            <person name="Toyoda T."/>
            <person name="Konagaya A."/>
            <person name="Carninci P."/>
            <person name="Kawai J."/>
            <person name="Hayashizaki Y."/>
            <person name="Shinozaki K."/>
        </authorList>
    </citation>
    <scope>NUCLEOTIDE SEQUENCE [LARGE SCALE MRNA]</scope>
    <source>
        <strain>cv. Columbia</strain>
    </source>
</reference>
<reference key="4">
    <citation type="submission" date="2006-02" db="EMBL/GenBank/DDBJ databases">
        <title>Arabidopsis ORF clones.</title>
        <authorList>
            <person name="Shinn P."/>
            <person name="Chen H."/>
            <person name="Kim C.J."/>
            <person name="Ecker J.R."/>
        </authorList>
    </citation>
    <scope>NUCLEOTIDE SEQUENCE [LARGE SCALE MRNA]</scope>
    <source>
        <strain>cv. Columbia</strain>
    </source>
</reference>
<reference key="5">
    <citation type="journal article" date="2007" name="Plant Cell">
        <title>The Arabidopsis aba4-1 mutant reveals a specific function for neoxanthin in protection against photooxidative stress.</title>
        <authorList>
            <person name="Dall'Osto L."/>
            <person name="Cazzaniga S."/>
            <person name="North H."/>
            <person name="Marion-Poll A."/>
            <person name="Bassi R."/>
        </authorList>
    </citation>
    <scope>FUNCTION</scope>
    <scope>DISRUPTION PHENOTYPE</scope>
</reference>
<reference key="6">
    <citation type="journal article" date="2007" name="Plant J.">
        <title>The Arabidopsis ABA-deficient mutant aba4 demonstrates that the major route for stress-induced ABA accumulation is via neoxanthin isomers.</title>
        <authorList>
            <person name="North H.M."/>
            <person name="De Almeida A."/>
            <person name="Boutin J.P."/>
            <person name="Frey A."/>
            <person name="To A."/>
            <person name="Botran L."/>
            <person name="Sotta B."/>
            <person name="Marion-Poll A."/>
        </authorList>
    </citation>
    <scope>FUNCTION</scope>
    <scope>TISSUE SPECIFICITY</scope>
    <scope>DISRUPTION PHENOTYPE</scope>
</reference>
<reference key="7">
    <citation type="journal article" date="2012" name="Plant Sci.">
        <title>Transcriptional response of abscisic acid (ABA) metabolism and transport to cold and heat stress applied at the reproductive stage of development in Arabidopsis thaliana.</title>
        <authorList>
            <person name="Baron K.N."/>
            <person name="Schroeder D.F."/>
            <person name="Stasolla C."/>
        </authorList>
    </citation>
    <scope>INDUCTION BY HEAT STRESS</scope>
</reference>